<keyword id="KW-0131">Cell cycle</keyword>
<keyword id="KW-0132">Cell division</keyword>
<keyword id="KW-0133">Cell shape</keyword>
<keyword id="KW-0961">Cell wall biogenesis/degradation</keyword>
<keyword id="KW-0963">Cytoplasm</keyword>
<keyword id="KW-0573">Peptidoglycan synthesis</keyword>
<keyword id="KW-0670">Pyruvate</keyword>
<keyword id="KW-0808">Transferase</keyword>
<reference key="1">
    <citation type="journal article" date="2002" name="Mol. Microbiol.">
        <title>Genome sequence of Streptococcus agalactiae, a pathogen causing invasive neonatal disease.</title>
        <authorList>
            <person name="Glaser P."/>
            <person name="Rusniok C."/>
            <person name="Buchrieser C."/>
            <person name="Chevalier F."/>
            <person name="Frangeul L."/>
            <person name="Msadek T."/>
            <person name="Zouine M."/>
            <person name="Couve E."/>
            <person name="Lalioui L."/>
            <person name="Poyart C."/>
            <person name="Trieu-Cuot P."/>
            <person name="Kunst F."/>
        </authorList>
    </citation>
    <scope>NUCLEOTIDE SEQUENCE [LARGE SCALE GENOMIC DNA]</scope>
    <source>
        <strain>NEM316</strain>
    </source>
</reference>
<evidence type="ECO:0000255" key="1">
    <source>
        <dbReference type="HAMAP-Rule" id="MF_00111"/>
    </source>
</evidence>
<gene>
    <name evidence="1" type="primary">murA2</name>
    <name type="synonym">murA</name>
    <name type="ordered locus">gbs0883</name>
</gene>
<protein>
    <recommendedName>
        <fullName evidence="1">UDP-N-acetylglucosamine 1-carboxyvinyltransferase 2</fullName>
        <ecNumber evidence="1">2.5.1.7</ecNumber>
    </recommendedName>
    <alternativeName>
        <fullName evidence="1">Enoylpyruvate transferase 2</fullName>
    </alternativeName>
    <alternativeName>
        <fullName evidence="1">UDP-N-acetylglucosamine enolpyruvyl transferase 2</fullName>
        <shortName evidence="1">EPT 2</shortName>
    </alternativeName>
</protein>
<dbReference type="EC" id="2.5.1.7" evidence="1"/>
<dbReference type="EMBL" id="AL766847">
    <property type="protein sequence ID" value="CAD46527.1"/>
    <property type="molecule type" value="Genomic_DNA"/>
</dbReference>
<dbReference type="RefSeq" id="WP_000357880.1">
    <property type="nucleotide sequence ID" value="NC_004368.1"/>
</dbReference>
<dbReference type="SMR" id="Q8E5U6"/>
<dbReference type="GeneID" id="66885816"/>
<dbReference type="KEGG" id="san:murA"/>
<dbReference type="eggNOG" id="COG0766">
    <property type="taxonomic scope" value="Bacteria"/>
</dbReference>
<dbReference type="HOGENOM" id="CLU_027387_0_0_9"/>
<dbReference type="UniPathway" id="UPA00219"/>
<dbReference type="Proteomes" id="UP000000823">
    <property type="component" value="Chromosome"/>
</dbReference>
<dbReference type="GO" id="GO:0005737">
    <property type="term" value="C:cytoplasm"/>
    <property type="evidence" value="ECO:0007669"/>
    <property type="project" value="UniProtKB-SubCell"/>
</dbReference>
<dbReference type="GO" id="GO:0008760">
    <property type="term" value="F:UDP-N-acetylglucosamine 1-carboxyvinyltransferase activity"/>
    <property type="evidence" value="ECO:0007669"/>
    <property type="project" value="UniProtKB-UniRule"/>
</dbReference>
<dbReference type="GO" id="GO:0051301">
    <property type="term" value="P:cell division"/>
    <property type="evidence" value="ECO:0007669"/>
    <property type="project" value="UniProtKB-KW"/>
</dbReference>
<dbReference type="GO" id="GO:0071555">
    <property type="term" value="P:cell wall organization"/>
    <property type="evidence" value="ECO:0007669"/>
    <property type="project" value="UniProtKB-KW"/>
</dbReference>
<dbReference type="GO" id="GO:0009252">
    <property type="term" value="P:peptidoglycan biosynthetic process"/>
    <property type="evidence" value="ECO:0007669"/>
    <property type="project" value="UniProtKB-UniRule"/>
</dbReference>
<dbReference type="GO" id="GO:0008360">
    <property type="term" value="P:regulation of cell shape"/>
    <property type="evidence" value="ECO:0007669"/>
    <property type="project" value="UniProtKB-KW"/>
</dbReference>
<dbReference type="GO" id="GO:0019277">
    <property type="term" value="P:UDP-N-acetylgalactosamine biosynthetic process"/>
    <property type="evidence" value="ECO:0007669"/>
    <property type="project" value="InterPro"/>
</dbReference>
<dbReference type="CDD" id="cd01555">
    <property type="entry name" value="UdpNAET"/>
    <property type="match status" value="1"/>
</dbReference>
<dbReference type="FunFam" id="3.65.10.10:FF:000001">
    <property type="entry name" value="UDP-N-acetylglucosamine 1-carboxyvinyltransferase"/>
    <property type="match status" value="1"/>
</dbReference>
<dbReference type="Gene3D" id="3.65.10.10">
    <property type="entry name" value="Enolpyruvate transferase domain"/>
    <property type="match status" value="2"/>
</dbReference>
<dbReference type="HAMAP" id="MF_00111">
    <property type="entry name" value="MurA"/>
    <property type="match status" value="1"/>
</dbReference>
<dbReference type="InterPro" id="IPR001986">
    <property type="entry name" value="Enolpyruvate_Tfrase_dom"/>
</dbReference>
<dbReference type="InterPro" id="IPR036968">
    <property type="entry name" value="Enolpyruvate_Tfrase_sf"/>
</dbReference>
<dbReference type="InterPro" id="IPR050068">
    <property type="entry name" value="MurA_subfamily"/>
</dbReference>
<dbReference type="InterPro" id="IPR013792">
    <property type="entry name" value="RNA3'P_cycl/enolpyr_Trfase_a/b"/>
</dbReference>
<dbReference type="InterPro" id="IPR005750">
    <property type="entry name" value="UDP_GlcNAc_COvinyl_MurA"/>
</dbReference>
<dbReference type="NCBIfam" id="TIGR01072">
    <property type="entry name" value="murA"/>
    <property type="match status" value="1"/>
</dbReference>
<dbReference type="NCBIfam" id="NF006873">
    <property type="entry name" value="PRK09369.1"/>
    <property type="match status" value="1"/>
</dbReference>
<dbReference type="PANTHER" id="PTHR43783">
    <property type="entry name" value="UDP-N-ACETYLGLUCOSAMINE 1-CARBOXYVINYLTRANSFERASE"/>
    <property type="match status" value="1"/>
</dbReference>
<dbReference type="PANTHER" id="PTHR43783:SF1">
    <property type="entry name" value="UDP-N-ACETYLGLUCOSAMINE 1-CARBOXYVINYLTRANSFERASE"/>
    <property type="match status" value="1"/>
</dbReference>
<dbReference type="Pfam" id="PF00275">
    <property type="entry name" value="EPSP_synthase"/>
    <property type="match status" value="1"/>
</dbReference>
<dbReference type="SUPFAM" id="SSF55205">
    <property type="entry name" value="EPT/RTPC-like"/>
    <property type="match status" value="1"/>
</dbReference>
<feature type="chain" id="PRO_0000231274" description="UDP-N-acetylglucosamine 1-carboxyvinyltransferase 2">
    <location>
        <begin position="1"/>
        <end position="423"/>
    </location>
</feature>
<feature type="active site" description="Proton donor" evidence="1">
    <location>
        <position position="120"/>
    </location>
</feature>
<feature type="binding site" evidence="1">
    <location>
        <begin position="23"/>
        <end position="24"/>
    </location>
    <ligand>
        <name>phosphoenolpyruvate</name>
        <dbReference type="ChEBI" id="CHEBI:58702"/>
    </ligand>
</feature>
<feature type="binding site" evidence="1">
    <location>
        <position position="96"/>
    </location>
    <ligand>
        <name>UDP-N-acetyl-alpha-D-glucosamine</name>
        <dbReference type="ChEBI" id="CHEBI:57705"/>
    </ligand>
</feature>
<feature type="binding site" evidence="1">
    <location>
        <begin position="125"/>
        <end position="129"/>
    </location>
    <ligand>
        <name>UDP-N-acetyl-alpha-D-glucosamine</name>
        <dbReference type="ChEBI" id="CHEBI:57705"/>
    </ligand>
</feature>
<feature type="binding site" evidence="1">
    <location>
        <position position="309"/>
    </location>
    <ligand>
        <name>UDP-N-acetyl-alpha-D-glucosamine</name>
        <dbReference type="ChEBI" id="CHEBI:57705"/>
    </ligand>
</feature>
<feature type="binding site" evidence="1">
    <location>
        <position position="331"/>
    </location>
    <ligand>
        <name>UDP-N-acetyl-alpha-D-glucosamine</name>
        <dbReference type="ChEBI" id="CHEBI:57705"/>
    </ligand>
</feature>
<feature type="modified residue" description="2-(S-cysteinyl)pyruvic acid O-phosphothioketal" evidence="1">
    <location>
        <position position="120"/>
    </location>
</feature>
<accession>Q8E5U6</accession>
<proteinExistence type="inferred from homology"/>
<comment type="function">
    <text evidence="1">Cell wall formation. Adds enolpyruvyl to UDP-N-acetylglucosamine.</text>
</comment>
<comment type="catalytic activity">
    <reaction evidence="1">
        <text>phosphoenolpyruvate + UDP-N-acetyl-alpha-D-glucosamine = UDP-N-acetyl-3-O-(1-carboxyvinyl)-alpha-D-glucosamine + phosphate</text>
        <dbReference type="Rhea" id="RHEA:18681"/>
        <dbReference type="ChEBI" id="CHEBI:43474"/>
        <dbReference type="ChEBI" id="CHEBI:57705"/>
        <dbReference type="ChEBI" id="CHEBI:58702"/>
        <dbReference type="ChEBI" id="CHEBI:68483"/>
        <dbReference type="EC" id="2.5.1.7"/>
    </reaction>
</comment>
<comment type="pathway">
    <text evidence="1">Cell wall biogenesis; peptidoglycan biosynthesis.</text>
</comment>
<comment type="subcellular location">
    <subcellularLocation>
        <location evidence="1">Cytoplasm</location>
    </subcellularLocation>
</comment>
<comment type="similarity">
    <text evidence="1">Belongs to the EPSP synthase family. MurA subfamily.</text>
</comment>
<name>MURA2_STRA3</name>
<sequence length="423" mass="45270">MDKIIVEGGQTRLQGQVVIEGAKNAVLPLLAATILPSQGKTLLTNVPILSDVFTMNNVVRGLDIQVDFNCDKKEILVDASGDILDVAPYEFVSQMRASIVVLGPILARNGHAKVSMPGGCTIGSRPIDLHLKGLEAMGATITQNGGDITAQAEKLKGANIYMDFPSVGATQNLMMAATLASGTTTIENAAREPEIVDLAQLLNKMGAKVKGAGTETLTIIGVDALHGTEHDVVQDRIEAGTFMVAAAMTSGNVLVKDAIWEHNRPLISKLMEMGVEVSEEEDGIRVKADTKKLKPVTVKTLPHPGFPTDMQAQFTALMAVVNGESTMIETVFENRFQHLEEMRRMGLQTEILRDTAMIHGGRALQGAPVMSTDLRASAALILAGMVAQGQTVVGQLTHLDRGYYQFHEKLAALGANIKRVSEA</sequence>
<organism>
    <name type="scientific">Streptococcus agalactiae serotype III (strain NEM316)</name>
    <dbReference type="NCBI Taxonomy" id="211110"/>
    <lineage>
        <taxon>Bacteria</taxon>
        <taxon>Bacillati</taxon>
        <taxon>Bacillota</taxon>
        <taxon>Bacilli</taxon>
        <taxon>Lactobacillales</taxon>
        <taxon>Streptococcaceae</taxon>
        <taxon>Streptococcus</taxon>
    </lineage>
</organism>